<sequence>MAGLKRRASQVWPEEHGEQEHGLYSLHRMFDIVGTHLTHRDVRVLSFLFVDVIDDHERGLIRNGRDFLLALERQGRCDESNFRQVLQLLRIITRHDLLPYVTLKRRRAVCPDLVDKYLEETSIRYVTPRALSDPEPRPPQPSKTVPPHYPVVCCPTSGPQMCSKRPARGRATLGSQRKRRKSVTPDPKEKQTCDIRLRVRAEYCQHETALQGNVFSNKQDPLERQFERFNQANTILKSRDLGSIICDIKFSELTYLDAFWRDYINGSLLEALKGVFITDSLKQAVGHEAIKLLVNVDEEDYELGRQKLLRNLMLQALP</sequence>
<name>DEDD_HUMAN</name>
<dbReference type="EMBL" id="AF083236">
    <property type="protein sequence ID" value="AAC33105.1"/>
    <property type="molecule type" value="mRNA"/>
</dbReference>
<dbReference type="EMBL" id="AF100341">
    <property type="protein sequence ID" value="AAD16414.1"/>
    <property type="molecule type" value="mRNA"/>
</dbReference>
<dbReference type="EMBL" id="AF043733">
    <property type="protein sequence ID" value="AAC80280.1"/>
    <property type="molecule type" value="mRNA"/>
</dbReference>
<dbReference type="EMBL" id="AJ010973">
    <property type="protein sequence ID" value="CAA09445.1"/>
    <property type="molecule type" value="mRNA"/>
</dbReference>
<dbReference type="EMBL" id="AF064605">
    <property type="protein sequence ID" value="AAC17110.3"/>
    <property type="molecule type" value="mRNA"/>
</dbReference>
<dbReference type="EMBL" id="CR536556">
    <property type="protein sequence ID" value="CAG38793.1"/>
    <property type="molecule type" value="mRNA"/>
</dbReference>
<dbReference type="EMBL" id="AL591806">
    <property type="status" value="NOT_ANNOTATED_CDS"/>
    <property type="molecule type" value="Genomic_DNA"/>
</dbReference>
<dbReference type="EMBL" id="CH471121">
    <property type="protein sequence ID" value="EAW52648.1"/>
    <property type="molecule type" value="Genomic_DNA"/>
</dbReference>
<dbReference type="EMBL" id="CH471121">
    <property type="protein sequence ID" value="EAW52650.1"/>
    <property type="molecule type" value="Genomic_DNA"/>
</dbReference>
<dbReference type="EMBL" id="CH471121">
    <property type="protein sequence ID" value="EAW52651.1"/>
    <property type="molecule type" value="Genomic_DNA"/>
</dbReference>
<dbReference type="EMBL" id="CH471121">
    <property type="protein sequence ID" value="EAW52652.1"/>
    <property type="molecule type" value="Genomic_DNA"/>
</dbReference>
<dbReference type="EMBL" id="CH471121">
    <property type="protein sequence ID" value="EAW52653.1"/>
    <property type="molecule type" value="Genomic_DNA"/>
</dbReference>
<dbReference type="EMBL" id="BC016724">
    <property type="protein sequence ID" value="AAH16724.1"/>
    <property type="molecule type" value="mRNA"/>
</dbReference>
<dbReference type="EMBL" id="BC013910">
    <property type="protein sequence ID" value="AAH13910.1"/>
    <property type="molecule type" value="mRNA"/>
</dbReference>
<dbReference type="CCDS" id="CCDS1219.1">
    <molecule id="O75618-1"/>
</dbReference>
<dbReference type="CCDS" id="CCDS81391.1">
    <molecule id="O75618-2"/>
</dbReference>
<dbReference type="RefSeq" id="NP_001034800.1">
    <molecule id="O75618-1"/>
    <property type="nucleotide sequence ID" value="NM_001039711.2"/>
</dbReference>
<dbReference type="RefSeq" id="NP_001034801.1">
    <molecule id="O75618-1"/>
    <property type="nucleotide sequence ID" value="NM_001039712.2"/>
</dbReference>
<dbReference type="RefSeq" id="NP_127491.1">
    <molecule id="O75618-1"/>
    <property type="nucleotide sequence ID" value="NM_032998.3"/>
</dbReference>
<dbReference type="RefSeq" id="XP_016858291.1">
    <property type="nucleotide sequence ID" value="XM_017002802.1"/>
</dbReference>
<dbReference type="SMR" id="O75618"/>
<dbReference type="BioGRID" id="114627">
    <property type="interactions" value="28"/>
</dbReference>
<dbReference type="DIP" id="DIP-41944N"/>
<dbReference type="FunCoup" id="O75618">
    <property type="interactions" value="2520"/>
</dbReference>
<dbReference type="IntAct" id="O75618">
    <property type="interactions" value="25"/>
</dbReference>
<dbReference type="MINT" id="O75618"/>
<dbReference type="STRING" id="9606.ENSP00000356984"/>
<dbReference type="GlyGen" id="O75618">
    <property type="glycosylation" value="1 site"/>
</dbReference>
<dbReference type="iPTMnet" id="O75618"/>
<dbReference type="PhosphoSitePlus" id="O75618"/>
<dbReference type="BioMuta" id="DEDD"/>
<dbReference type="jPOST" id="O75618"/>
<dbReference type="MassIVE" id="O75618"/>
<dbReference type="PaxDb" id="9606-ENSP00000356985"/>
<dbReference type="PeptideAtlas" id="O75618"/>
<dbReference type="ProteomicsDB" id="50122">
    <molecule id="O75618-1"/>
</dbReference>
<dbReference type="ProteomicsDB" id="50123">
    <molecule id="O75618-2"/>
</dbReference>
<dbReference type="Antibodypedia" id="34292">
    <property type="antibodies" value="232 antibodies from 33 providers"/>
</dbReference>
<dbReference type="DNASU" id="9191"/>
<dbReference type="Ensembl" id="ENST00000368006.8">
    <molecule id="O75618-1"/>
    <property type="protein sequence ID" value="ENSP00000356985.3"/>
    <property type="gene ID" value="ENSG00000158796.17"/>
</dbReference>
<dbReference type="Ensembl" id="ENST00000458050.6">
    <molecule id="O75618-1"/>
    <property type="protein sequence ID" value="ENSP00000414821.2"/>
    <property type="gene ID" value="ENSG00000158796.17"/>
</dbReference>
<dbReference type="Ensembl" id="ENST00000490843.6">
    <molecule id="O75618-1"/>
    <property type="protein sequence ID" value="ENSP00000476946.1"/>
    <property type="gene ID" value="ENSG00000158796.17"/>
</dbReference>
<dbReference type="Ensembl" id="ENST00000545495.5">
    <molecule id="O75618-1"/>
    <property type="protein sequence ID" value="ENSP00000445835.1"/>
    <property type="gene ID" value="ENSG00000158796.17"/>
</dbReference>
<dbReference type="GeneID" id="9191"/>
<dbReference type="KEGG" id="hsa:9191"/>
<dbReference type="MANE-Select" id="ENST00000368006.8">
    <property type="protein sequence ID" value="ENSP00000356985.3"/>
    <property type="RefSeq nucleotide sequence ID" value="NM_032998.3"/>
    <property type="RefSeq protein sequence ID" value="NP_127491.1"/>
</dbReference>
<dbReference type="UCSC" id="uc001fxz.5">
    <molecule id="O75618-1"/>
    <property type="organism name" value="human"/>
</dbReference>
<dbReference type="AGR" id="HGNC:2755"/>
<dbReference type="CTD" id="9191"/>
<dbReference type="DisGeNET" id="9191"/>
<dbReference type="GeneCards" id="DEDD"/>
<dbReference type="HGNC" id="HGNC:2755">
    <property type="gene designation" value="DEDD"/>
</dbReference>
<dbReference type="HPA" id="ENSG00000158796">
    <property type="expression patterns" value="Low tissue specificity"/>
</dbReference>
<dbReference type="MIM" id="606841">
    <property type="type" value="gene"/>
</dbReference>
<dbReference type="neXtProt" id="NX_O75618"/>
<dbReference type="OpenTargets" id="ENSG00000158796"/>
<dbReference type="PharmGKB" id="PA27236"/>
<dbReference type="VEuPathDB" id="HostDB:ENSG00000158796"/>
<dbReference type="eggNOG" id="ENOG502QRWB">
    <property type="taxonomic scope" value="Eukaryota"/>
</dbReference>
<dbReference type="GeneTree" id="ENSGT00390000008714"/>
<dbReference type="HOGENOM" id="CLU_053869_0_0_1"/>
<dbReference type="InParanoid" id="O75618"/>
<dbReference type="OMA" id="CKDAVAH"/>
<dbReference type="OrthoDB" id="6422954at2759"/>
<dbReference type="PAN-GO" id="O75618">
    <property type="GO annotations" value="3 GO annotations based on evolutionary models"/>
</dbReference>
<dbReference type="PhylomeDB" id="O75618"/>
<dbReference type="TreeFam" id="TF331807"/>
<dbReference type="PathwayCommons" id="O75618"/>
<dbReference type="SignaLink" id="O75618"/>
<dbReference type="BioGRID-ORCS" id="9191">
    <property type="hits" value="11 hits in 1161 CRISPR screens"/>
</dbReference>
<dbReference type="ChiTaRS" id="DEDD">
    <property type="organism name" value="human"/>
</dbReference>
<dbReference type="GeneWiki" id="DEDD"/>
<dbReference type="GenomeRNAi" id="9191"/>
<dbReference type="Pharos" id="O75618">
    <property type="development level" value="Tbio"/>
</dbReference>
<dbReference type="PRO" id="PR:O75618"/>
<dbReference type="Proteomes" id="UP000005640">
    <property type="component" value="Chromosome 1"/>
</dbReference>
<dbReference type="RNAct" id="O75618">
    <property type="molecule type" value="protein"/>
</dbReference>
<dbReference type="Bgee" id="ENSG00000158796">
    <property type="expression patterns" value="Expressed in oocyte and 210 other cell types or tissues"/>
</dbReference>
<dbReference type="ExpressionAtlas" id="O75618">
    <property type="expression patterns" value="baseline and differential"/>
</dbReference>
<dbReference type="GO" id="GO:0005737">
    <property type="term" value="C:cytoplasm"/>
    <property type="evidence" value="ECO:0000250"/>
    <property type="project" value="UniProtKB"/>
</dbReference>
<dbReference type="GO" id="GO:0005730">
    <property type="term" value="C:nucleolus"/>
    <property type="evidence" value="ECO:0000250"/>
    <property type="project" value="UniProtKB"/>
</dbReference>
<dbReference type="GO" id="GO:0003677">
    <property type="term" value="F:DNA binding"/>
    <property type="evidence" value="ECO:0000250"/>
    <property type="project" value="UniProtKB"/>
</dbReference>
<dbReference type="GO" id="GO:0046697">
    <property type="term" value="P:decidualization"/>
    <property type="evidence" value="ECO:0007669"/>
    <property type="project" value="Ensembl"/>
</dbReference>
<dbReference type="GO" id="GO:0008625">
    <property type="term" value="P:extrinsic apoptotic signaling pathway via death domain receptors"/>
    <property type="evidence" value="ECO:0000318"/>
    <property type="project" value="GO_Central"/>
</dbReference>
<dbReference type="GO" id="GO:0042177">
    <property type="term" value="P:negative regulation of protein catabolic process"/>
    <property type="evidence" value="ECO:0007669"/>
    <property type="project" value="Ensembl"/>
</dbReference>
<dbReference type="GO" id="GO:1901837">
    <property type="term" value="P:negative regulation of transcription of nucleolar large rRNA by RNA polymerase I"/>
    <property type="evidence" value="ECO:0007669"/>
    <property type="project" value="Ensembl"/>
</dbReference>
<dbReference type="GO" id="GO:0042981">
    <property type="term" value="P:regulation of apoptotic process"/>
    <property type="evidence" value="ECO:0007669"/>
    <property type="project" value="InterPro"/>
</dbReference>
<dbReference type="GO" id="GO:0007283">
    <property type="term" value="P:spermatogenesis"/>
    <property type="evidence" value="ECO:0000304"/>
    <property type="project" value="ProtInc"/>
</dbReference>
<dbReference type="CDD" id="cd08790">
    <property type="entry name" value="DED_DEDD"/>
    <property type="match status" value="1"/>
</dbReference>
<dbReference type="FunFam" id="1.10.533.10:FF:000004">
    <property type="entry name" value="Death effector domain-containing protein-like"/>
    <property type="match status" value="1"/>
</dbReference>
<dbReference type="Gene3D" id="1.10.533.10">
    <property type="entry name" value="Death Domain, Fas"/>
    <property type="match status" value="1"/>
</dbReference>
<dbReference type="InterPro" id="IPR011029">
    <property type="entry name" value="DEATH-like_dom_sf"/>
</dbReference>
<dbReference type="InterPro" id="IPR001875">
    <property type="entry name" value="DED_dom"/>
</dbReference>
<dbReference type="InterPro" id="IPR038856">
    <property type="entry name" value="DEDD/DEDD2"/>
</dbReference>
<dbReference type="InterPro" id="IPR049341">
    <property type="entry name" value="TRADD-like_N"/>
</dbReference>
<dbReference type="PANTHER" id="PTHR15205">
    <property type="entry name" value="DEATH EFFECTOR DOMAIN-CONTAINING PROTEIN"/>
    <property type="match status" value="1"/>
</dbReference>
<dbReference type="PANTHER" id="PTHR15205:SF2">
    <property type="entry name" value="DEATH EFFECTOR DOMAIN-CONTAINING PROTEIN"/>
    <property type="match status" value="1"/>
</dbReference>
<dbReference type="Pfam" id="PF01335">
    <property type="entry name" value="DED"/>
    <property type="match status" value="1"/>
</dbReference>
<dbReference type="Pfam" id="PF20694">
    <property type="entry name" value="TRADD-like_N"/>
    <property type="match status" value="1"/>
</dbReference>
<dbReference type="SMART" id="SM00031">
    <property type="entry name" value="DED"/>
    <property type="match status" value="1"/>
</dbReference>
<dbReference type="SUPFAM" id="SSF47986">
    <property type="entry name" value="DEATH domain"/>
    <property type="match status" value="1"/>
</dbReference>
<dbReference type="PROSITE" id="PS50168">
    <property type="entry name" value="DED"/>
    <property type="match status" value="1"/>
</dbReference>
<evidence type="ECO:0000250" key="1"/>
<evidence type="ECO:0000255" key="2">
    <source>
        <dbReference type="PROSITE-ProRule" id="PRU00065"/>
    </source>
</evidence>
<evidence type="ECO:0000256" key="3">
    <source>
        <dbReference type="SAM" id="MobiDB-lite"/>
    </source>
</evidence>
<evidence type="ECO:0000269" key="4">
    <source>
    </source>
</evidence>
<evidence type="ECO:0000269" key="5">
    <source>
    </source>
</evidence>
<evidence type="ECO:0000269" key="6">
    <source>
    </source>
</evidence>
<evidence type="ECO:0000269" key="7">
    <source>
    </source>
</evidence>
<evidence type="ECO:0000303" key="8">
    <source ref="5"/>
</evidence>
<comment type="function">
    <text evidence="1 5">A scaffold protein that directs CASP3 to certain substrates and facilitates their ordered degradation during apoptosis. May also play a role in mediating CASP3 cleavage of KRT18. Regulates degradation of intermediate filaments during apoptosis. May play a role in the general transcription machinery in the nucleus and might be an important regulator of the activity of GTF3C3. Inhibits DNA transcription in vitro (By similarity).</text>
</comment>
<comment type="subunit">
    <text evidence="4 5 6">Interacts with CASP8, CASP10, KRT8, KRT18, CASP3 and FADD. Homodimerizes and heterodimerizes with DEDD2.</text>
</comment>
<comment type="interaction">
    <interactant intactId="EBI-1043164">
        <id>O75618</id>
    </interactant>
    <interactant intactId="EBI-79306">
        <id>Q06481</id>
        <label>APLP2</label>
    </interactant>
    <organismsDiffer>false</organismsDiffer>
    <experiments>3</experiments>
</comment>
<comment type="interaction">
    <interactant intactId="EBI-15621191">
        <id>O75618-1</id>
    </interactant>
    <interactant intactId="EBI-495332">
        <id>P14635</id>
        <label>CCNB1</label>
    </interactant>
    <organismsDiffer>false</organismsDiffer>
    <experiments>3</experiments>
</comment>
<comment type="interaction">
    <interactant intactId="EBI-15621191">
        <id>O75618-1</id>
    </interactant>
    <interactant intactId="EBI-444308">
        <id>P06493</id>
        <label>CDK1</label>
    </interactant>
    <organismsDiffer>false</organismsDiffer>
    <experiments>2</experiments>
</comment>
<comment type="subcellular location">
    <subcellularLocation>
        <location>Cytoplasm</location>
    </subcellularLocation>
    <subcellularLocation>
        <location evidence="1">Nucleus</location>
        <location evidence="1">Nucleolus</location>
    </subcellularLocation>
    <text evidence="1">Translocated to the nucleus during CD95-mediated apoptosis where it is localized in the nucleoli (By similarity). Following apoptosis induction, the mono and/or diubiquitination form increases and forms filamentous structures that colocalize with KRT8 and KRT18 intermediate filament network in simple epithelial cells.</text>
</comment>
<comment type="alternative products">
    <event type="alternative splicing"/>
    <isoform>
        <id>O75618-1</id>
        <name>1</name>
        <sequence type="displayed"/>
    </isoform>
    <isoform>
        <id>O75618-2</id>
        <name>2</name>
        <sequence type="described" ref="VSP_003846"/>
    </isoform>
</comment>
<comment type="tissue specificity">
    <text evidence="7">Widely expressed with highest levels in testis.</text>
</comment>
<comment type="PTM">
    <text>Exists predominantly in a mono- or diubiquitinated form.</text>
</comment>
<organism>
    <name type="scientific">Homo sapiens</name>
    <name type="common">Human</name>
    <dbReference type="NCBI Taxonomy" id="9606"/>
    <lineage>
        <taxon>Eukaryota</taxon>
        <taxon>Metazoa</taxon>
        <taxon>Chordata</taxon>
        <taxon>Craniata</taxon>
        <taxon>Vertebrata</taxon>
        <taxon>Euteleostomi</taxon>
        <taxon>Mammalia</taxon>
        <taxon>Eutheria</taxon>
        <taxon>Euarchontoglires</taxon>
        <taxon>Primates</taxon>
        <taxon>Haplorrhini</taxon>
        <taxon>Catarrhini</taxon>
        <taxon>Hominidae</taxon>
        <taxon>Homo</taxon>
    </lineage>
</organism>
<accession>O75618</accession>
<accession>D3DVF5</accession>
<accession>O60737</accession>
<protein>
    <recommendedName>
        <fullName>Death effector domain-containing protein</fullName>
    </recommendedName>
    <alternativeName>
        <fullName>DEDPro1</fullName>
    </alternativeName>
    <alternativeName>
        <fullName>Death effector domain-containing testicular molecule</fullName>
    </alternativeName>
    <alternativeName>
        <fullName>FLDED-1</fullName>
    </alternativeName>
</protein>
<proteinExistence type="evidence at protein level"/>
<gene>
    <name type="primary">DEDD</name>
    <name type="synonym">DEDPRO1</name>
    <name type="synonym">DEFT</name>
    <name type="ORF">KE05</name>
</gene>
<feature type="chain" id="PRO_0000191274" description="Death effector domain-containing protein">
    <location>
        <begin position="1"/>
        <end position="318"/>
    </location>
</feature>
<feature type="domain" description="DED" evidence="2">
    <location>
        <begin position="25"/>
        <end position="103"/>
    </location>
</feature>
<feature type="region of interest" description="Disordered" evidence="3">
    <location>
        <begin position="128"/>
        <end position="147"/>
    </location>
</feature>
<feature type="region of interest" description="Disordered" evidence="3">
    <location>
        <begin position="160"/>
        <end position="191"/>
    </location>
</feature>
<feature type="splice variant" id="VSP_003846" description="In isoform 2." evidence="8">
    <original>D</original>
    <variation>GEEIQGFQRWSRLEGEYKELLGHWAVYAIQY</variation>
    <location>
        <position position="194"/>
    </location>
</feature>
<keyword id="KW-0025">Alternative splicing</keyword>
<keyword id="KW-0053">Apoptosis</keyword>
<keyword id="KW-0963">Cytoplasm</keyword>
<keyword id="KW-0238">DNA-binding</keyword>
<keyword id="KW-0539">Nucleus</keyword>
<keyword id="KW-1267">Proteomics identification</keyword>
<keyword id="KW-1185">Reference proteome</keyword>
<keyword id="KW-0678">Repressor</keyword>
<keyword id="KW-0804">Transcription</keyword>
<keyword id="KW-0805">Transcription regulation</keyword>
<keyword id="KW-0832">Ubl conjugation</keyword>
<reference key="1">
    <citation type="journal article" date="1998" name="EMBO J.">
        <title>DEDD, a novel death effector domain-containing protein, targeted to the nucleolus.</title>
        <authorList>
            <person name="Stegh A.H."/>
            <person name="Schickling O."/>
            <person name="Ehret A."/>
            <person name="Scaffidi C."/>
            <person name="Peterhaensel C."/>
            <person name="Hofmann T.G."/>
            <person name="Grummt I."/>
            <person name="Krammer P.H."/>
            <person name="Peter M.E."/>
        </authorList>
    </citation>
    <scope>NUCLEOTIDE SEQUENCE [MRNA] (ISOFORM 1)</scope>
</reference>
<reference key="2">
    <citation type="journal article" date="1998" name="Endocrinology">
        <title>DEFT, a novel death effector domain-containing molecule predominantly expressed in testicular germ cells.</title>
        <authorList>
            <person name="Leo C.P."/>
            <person name="Hsu S.Y."/>
            <person name="McGee E.A."/>
            <person name="Salanova M."/>
            <person name="Hsueh A.J.W."/>
        </authorList>
    </citation>
    <scope>NUCLEOTIDE SEQUENCE [MRNA] (ISOFORM 1)</scope>
    <scope>TISSUE SPECIFICITY</scope>
    <source>
        <tissue>Testis</tissue>
    </source>
</reference>
<reference key="3">
    <citation type="submission" date="1998-08" db="EMBL/GenBank/DDBJ databases">
        <title>FLDED-1, a novel molecule with a DED-like domain.</title>
        <authorList>
            <person name="Pan G."/>
        </authorList>
    </citation>
    <scope>NUCLEOTIDE SEQUENCE [MRNA] (ISOFORM 1)</scope>
</reference>
<reference key="4">
    <citation type="submission" date="1998-10" db="EMBL/GenBank/DDBJ databases">
        <title>DEDPRO1, a novel DED-containing protein.</title>
        <authorList>
            <person name="Thome M."/>
            <person name="Tschopp J."/>
        </authorList>
    </citation>
    <scope>NUCLEOTIDE SEQUENCE [MRNA] (ISOFORM 1)</scope>
</reference>
<reference key="5">
    <citation type="submission" date="2002-03" db="EMBL/GenBank/DDBJ databases">
        <title>A novel gene from human dendritic cell.</title>
        <authorList>
            <person name="Zhao Z."/>
            <person name="Huang X."/>
            <person name="Li N."/>
            <person name="Zhu X."/>
            <person name="Cao X."/>
        </authorList>
    </citation>
    <scope>NUCLEOTIDE SEQUENCE [LARGE SCALE MRNA] (ISOFORM 2)</scope>
    <source>
        <tissue>Dendritic cell</tissue>
    </source>
</reference>
<reference key="6">
    <citation type="submission" date="2004-06" db="EMBL/GenBank/DDBJ databases">
        <title>Cloning of human full open reading frames in Gateway(TM) system entry vector (pDONR201).</title>
        <authorList>
            <person name="Halleck A."/>
            <person name="Ebert L."/>
            <person name="Mkoundinya M."/>
            <person name="Schick M."/>
            <person name="Eisenstein S."/>
            <person name="Neubert P."/>
            <person name="Kstrang K."/>
            <person name="Schatten R."/>
            <person name="Shen B."/>
            <person name="Henze S."/>
            <person name="Mar W."/>
            <person name="Korn B."/>
            <person name="Zuo D."/>
            <person name="Hu Y."/>
            <person name="LaBaer J."/>
        </authorList>
    </citation>
    <scope>NUCLEOTIDE SEQUENCE [LARGE SCALE MRNA] (ISOFORM 1)</scope>
</reference>
<reference key="7">
    <citation type="journal article" date="2006" name="Nature">
        <title>The DNA sequence and biological annotation of human chromosome 1.</title>
        <authorList>
            <person name="Gregory S.G."/>
            <person name="Barlow K.F."/>
            <person name="McLay K.E."/>
            <person name="Kaul R."/>
            <person name="Swarbreck D."/>
            <person name="Dunham A."/>
            <person name="Scott C.E."/>
            <person name="Howe K.L."/>
            <person name="Woodfine K."/>
            <person name="Spencer C.C.A."/>
            <person name="Jones M.C."/>
            <person name="Gillson C."/>
            <person name="Searle S."/>
            <person name="Zhou Y."/>
            <person name="Kokocinski F."/>
            <person name="McDonald L."/>
            <person name="Evans R."/>
            <person name="Phillips K."/>
            <person name="Atkinson A."/>
            <person name="Cooper R."/>
            <person name="Jones C."/>
            <person name="Hall R.E."/>
            <person name="Andrews T.D."/>
            <person name="Lloyd C."/>
            <person name="Ainscough R."/>
            <person name="Almeida J.P."/>
            <person name="Ambrose K.D."/>
            <person name="Anderson F."/>
            <person name="Andrew R.W."/>
            <person name="Ashwell R.I.S."/>
            <person name="Aubin K."/>
            <person name="Babbage A.K."/>
            <person name="Bagguley C.L."/>
            <person name="Bailey J."/>
            <person name="Beasley H."/>
            <person name="Bethel G."/>
            <person name="Bird C.P."/>
            <person name="Bray-Allen S."/>
            <person name="Brown J.Y."/>
            <person name="Brown A.J."/>
            <person name="Buckley D."/>
            <person name="Burton J."/>
            <person name="Bye J."/>
            <person name="Carder C."/>
            <person name="Chapman J.C."/>
            <person name="Clark S.Y."/>
            <person name="Clarke G."/>
            <person name="Clee C."/>
            <person name="Cobley V."/>
            <person name="Collier R.E."/>
            <person name="Corby N."/>
            <person name="Coville G.J."/>
            <person name="Davies J."/>
            <person name="Deadman R."/>
            <person name="Dunn M."/>
            <person name="Earthrowl M."/>
            <person name="Ellington A.G."/>
            <person name="Errington H."/>
            <person name="Frankish A."/>
            <person name="Frankland J."/>
            <person name="French L."/>
            <person name="Garner P."/>
            <person name="Garnett J."/>
            <person name="Gay L."/>
            <person name="Ghori M.R.J."/>
            <person name="Gibson R."/>
            <person name="Gilby L.M."/>
            <person name="Gillett W."/>
            <person name="Glithero R.J."/>
            <person name="Grafham D.V."/>
            <person name="Griffiths C."/>
            <person name="Griffiths-Jones S."/>
            <person name="Grocock R."/>
            <person name="Hammond S."/>
            <person name="Harrison E.S.I."/>
            <person name="Hart E."/>
            <person name="Haugen E."/>
            <person name="Heath P.D."/>
            <person name="Holmes S."/>
            <person name="Holt K."/>
            <person name="Howden P.J."/>
            <person name="Hunt A.R."/>
            <person name="Hunt S.E."/>
            <person name="Hunter G."/>
            <person name="Isherwood J."/>
            <person name="James R."/>
            <person name="Johnson C."/>
            <person name="Johnson D."/>
            <person name="Joy A."/>
            <person name="Kay M."/>
            <person name="Kershaw J.K."/>
            <person name="Kibukawa M."/>
            <person name="Kimberley A.M."/>
            <person name="King A."/>
            <person name="Knights A.J."/>
            <person name="Lad H."/>
            <person name="Laird G."/>
            <person name="Lawlor S."/>
            <person name="Leongamornlert D.A."/>
            <person name="Lloyd D.M."/>
            <person name="Loveland J."/>
            <person name="Lovell J."/>
            <person name="Lush M.J."/>
            <person name="Lyne R."/>
            <person name="Martin S."/>
            <person name="Mashreghi-Mohammadi M."/>
            <person name="Matthews L."/>
            <person name="Matthews N.S.W."/>
            <person name="McLaren S."/>
            <person name="Milne S."/>
            <person name="Mistry S."/>
            <person name="Moore M.J.F."/>
            <person name="Nickerson T."/>
            <person name="O'Dell C.N."/>
            <person name="Oliver K."/>
            <person name="Palmeiri A."/>
            <person name="Palmer S.A."/>
            <person name="Parker A."/>
            <person name="Patel D."/>
            <person name="Pearce A.V."/>
            <person name="Peck A.I."/>
            <person name="Pelan S."/>
            <person name="Phelps K."/>
            <person name="Phillimore B.J."/>
            <person name="Plumb R."/>
            <person name="Rajan J."/>
            <person name="Raymond C."/>
            <person name="Rouse G."/>
            <person name="Saenphimmachak C."/>
            <person name="Sehra H.K."/>
            <person name="Sheridan E."/>
            <person name="Shownkeen R."/>
            <person name="Sims S."/>
            <person name="Skuce C.D."/>
            <person name="Smith M."/>
            <person name="Steward C."/>
            <person name="Subramanian S."/>
            <person name="Sycamore N."/>
            <person name="Tracey A."/>
            <person name="Tromans A."/>
            <person name="Van Helmond Z."/>
            <person name="Wall M."/>
            <person name="Wallis J.M."/>
            <person name="White S."/>
            <person name="Whitehead S.L."/>
            <person name="Wilkinson J.E."/>
            <person name="Willey D.L."/>
            <person name="Williams H."/>
            <person name="Wilming L."/>
            <person name="Wray P.W."/>
            <person name="Wu Z."/>
            <person name="Coulson A."/>
            <person name="Vaudin M."/>
            <person name="Sulston J.E."/>
            <person name="Durbin R.M."/>
            <person name="Hubbard T."/>
            <person name="Wooster R."/>
            <person name="Dunham I."/>
            <person name="Carter N.P."/>
            <person name="McVean G."/>
            <person name="Ross M.T."/>
            <person name="Harrow J."/>
            <person name="Olson M.V."/>
            <person name="Beck S."/>
            <person name="Rogers J."/>
            <person name="Bentley D.R."/>
        </authorList>
    </citation>
    <scope>NUCLEOTIDE SEQUENCE [LARGE SCALE GENOMIC DNA]</scope>
</reference>
<reference key="8">
    <citation type="submission" date="2005-09" db="EMBL/GenBank/DDBJ databases">
        <authorList>
            <person name="Mural R.J."/>
            <person name="Istrail S."/>
            <person name="Sutton G.G."/>
            <person name="Florea L."/>
            <person name="Halpern A.L."/>
            <person name="Mobarry C.M."/>
            <person name="Lippert R."/>
            <person name="Walenz B."/>
            <person name="Shatkay H."/>
            <person name="Dew I."/>
            <person name="Miller J.R."/>
            <person name="Flanigan M.J."/>
            <person name="Edwards N.J."/>
            <person name="Bolanos R."/>
            <person name="Fasulo D."/>
            <person name="Halldorsson B.V."/>
            <person name="Hannenhalli S."/>
            <person name="Turner R."/>
            <person name="Yooseph S."/>
            <person name="Lu F."/>
            <person name="Nusskern D.R."/>
            <person name="Shue B.C."/>
            <person name="Zheng X.H."/>
            <person name="Zhong F."/>
            <person name="Delcher A.L."/>
            <person name="Huson D.H."/>
            <person name="Kravitz S.A."/>
            <person name="Mouchard L."/>
            <person name="Reinert K."/>
            <person name="Remington K.A."/>
            <person name="Clark A.G."/>
            <person name="Waterman M.S."/>
            <person name="Eichler E.E."/>
            <person name="Adams M.D."/>
            <person name="Hunkapiller M.W."/>
            <person name="Myers E.W."/>
            <person name="Venter J.C."/>
        </authorList>
    </citation>
    <scope>NUCLEOTIDE SEQUENCE [LARGE SCALE GENOMIC DNA]</scope>
</reference>
<reference key="9">
    <citation type="journal article" date="2004" name="Genome Res.">
        <title>The status, quality, and expansion of the NIH full-length cDNA project: the Mammalian Gene Collection (MGC).</title>
        <authorList>
            <consortium name="The MGC Project Team"/>
        </authorList>
    </citation>
    <scope>NUCLEOTIDE SEQUENCE [LARGE SCALE MRNA] (ISOFORM 1)</scope>
    <source>
        <tissue>Bone marrow</tissue>
        <tissue>Placenta</tissue>
    </source>
</reference>
<reference key="10">
    <citation type="journal article" date="2002" name="J. Cell Biol.">
        <title>DEDD regulates degradation of intermediate filaments during apoptosis.</title>
        <authorList>
            <person name="Lee J.C."/>
            <person name="Schickling O."/>
            <person name="Stegh A.H."/>
            <person name="Oshima R.G."/>
            <person name="Dinsdale D."/>
            <person name="Cohen G.M."/>
            <person name="Peter M.E."/>
        </authorList>
    </citation>
    <scope>FUNCTION</scope>
    <scope>INTERACTION WITH KRT8; KRT18 AND CASP3</scope>
</reference>
<reference key="11">
    <citation type="journal article" date="2002" name="Cell Death Differ.">
        <title>Death effector domain-containing proteins DEDD and FLAME-3 form nuclear complexes with the TFIIIC102 subunit of human transcription factor IIIC.</title>
        <authorList>
            <person name="Zhan Y."/>
            <person name="Hegde R."/>
            <person name="Srinivasula S.M."/>
            <person name="Fernandes-Alnemri T."/>
            <person name="Alnemri E.S."/>
        </authorList>
    </citation>
    <scope>INTERACTION WITH GTF3C3</scope>
</reference>
<reference key="12">
    <citation type="journal article" date="2003" name="Oncogene">
        <title>DEDD and DEDD2 associate with caspase-8/10 and signal cell death.</title>
        <authorList>
            <person name="Alcivar A."/>
            <person name="Hu S."/>
            <person name="Tang J."/>
            <person name="Yang X."/>
        </authorList>
    </citation>
    <scope>INTERACTION WITH CASP8 AND CASP10</scope>
</reference>